<organism>
    <name type="scientific">Clostridium perfringens (strain ATCC 13124 / DSM 756 / JCM 1290 / NCIMB 6125 / NCTC 8237 / Type A)</name>
    <dbReference type="NCBI Taxonomy" id="195103"/>
    <lineage>
        <taxon>Bacteria</taxon>
        <taxon>Bacillati</taxon>
        <taxon>Bacillota</taxon>
        <taxon>Clostridia</taxon>
        <taxon>Eubacteriales</taxon>
        <taxon>Clostridiaceae</taxon>
        <taxon>Clostridium</taxon>
    </lineage>
</organism>
<sequence>MHLKASLLDENAIRRALTRLSHEIIEKNKGVEDIVLVGIKRRGYPLAERLSEFIEKFEGVKIPVASVDITLYRDDLTNVSDTPNLNDPKIDVDIRGKKVIIVDDVLYTCRTARAAIDAIMDQGRPEFIQLAVLVDRGHKELPIRADYVGKNIPTSKDEIIKVQIKEIDGTDSVEIYEN</sequence>
<gene>
    <name evidence="1" type="primary">pyrR</name>
    <name type="ordered locus">CPF_2103</name>
</gene>
<protein>
    <recommendedName>
        <fullName evidence="1">Bifunctional protein PyrR</fullName>
    </recommendedName>
    <domain>
        <recommendedName>
            <fullName evidence="1">Pyrimidine operon regulatory protein</fullName>
        </recommendedName>
    </domain>
    <domain>
        <recommendedName>
            <fullName evidence="1">Uracil phosphoribosyltransferase</fullName>
            <shortName evidence="1">UPRTase</shortName>
            <ecNumber evidence="1">2.4.2.9</ecNumber>
        </recommendedName>
    </domain>
</protein>
<dbReference type="EC" id="2.4.2.9" evidence="1"/>
<dbReference type="EMBL" id="CP000246">
    <property type="protein sequence ID" value="ABG82879.1"/>
    <property type="molecule type" value="Genomic_DNA"/>
</dbReference>
<dbReference type="RefSeq" id="WP_003451681.1">
    <property type="nucleotide sequence ID" value="NC_008261.1"/>
</dbReference>
<dbReference type="SMR" id="Q0TPA8"/>
<dbReference type="STRING" id="195103.CPF_2103"/>
<dbReference type="PaxDb" id="195103-CPF_2103"/>
<dbReference type="GeneID" id="93001616"/>
<dbReference type="KEGG" id="cpf:CPF_2103"/>
<dbReference type="eggNOG" id="COG2065">
    <property type="taxonomic scope" value="Bacteria"/>
</dbReference>
<dbReference type="HOGENOM" id="CLU_094234_2_1_9"/>
<dbReference type="Proteomes" id="UP000001823">
    <property type="component" value="Chromosome"/>
</dbReference>
<dbReference type="GO" id="GO:0003723">
    <property type="term" value="F:RNA binding"/>
    <property type="evidence" value="ECO:0007669"/>
    <property type="project" value="UniProtKB-UniRule"/>
</dbReference>
<dbReference type="GO" id="GO:0004845">
    <property type="term" value="F:uracil phosphoribosyltransferase activity"/>
    <property type="evidence" value="ECO:0007669"/>
    <property type="project" value="UniProtKB-UniRule"/>
</dbReference>
<dbReference type="GO" id="GO:0006353">
    <property type="term" value="P:DNA-templated transcription termination"/>
    <property type="evidence" value="ECO:0007669"/>
    <property type="project" value="UniProtKB-UniRule"/>
</dbReference>
<dbReference type="CDD" id="cd06223">
    <property type="entry name" value="PRTases_typeI"/>
    <property type="match status" value="1"/>
</dbReference>
<dbReference type="FunFam" id="3.40.50.2020:FF:000020">
    <property type="entry name" value="Bifunctional protein PyrR"/>
    <property type="match status" value="1"/>
</dbReference>
<dbReference type="Gene3D" id="3.40.50.2020">
    <property type="match status" value="1"/>
</dbReference>
<dbReference type="HAMAP" id="MF_01219">
    <property type="entry name" value="PyrR"/>
    <property type="match status" value="1"/>
</dbReference>
<dbReference type="InterPro" id="IPR000836">
    <property type="entry name" value="PRibTrfase_dom"/>
</dbReference>
<dbReference type="InterPro" id="IPR029057">
    <property type="entry name" value="PRTase-like"/>
</dbReference>
<dbReference type="InterPro" id="IPR023050">
    <property type="entry name" value="PyrR"/>
</dbReference>
<dbReference type="InterPro" id="IPR050137">
    <property type="entry name" value="PyrR_bifunctional"/>
</dbReference>
<dbReference type="NCBIfam" id="NF003548">
    <property type="entry name" value="PRK05205.1-4"/>
    <property type="match status" value="1"/>
</dbReference>
<dbReference type="NCBIfam" id="NF003549">
    <property type="entry name" value="PRK05205.1-5"/>
    <property type="match status" value="1"/>
</dbReference>
<dbReference type="PANTHER" id="PTHR11608">
    <property type="entry name" value="BIFUNCTIONAL PROTEIN PYRR"/>
    <property type="match status" value="1"/>
</dbReference>
<dbReference type="PANTHER" id="PTHR11608:SF0">
    <property type="entry name" value="BIFUNCTIONAL PROTEIN PYRR"/>
    <property type="match status" value="1"/>
</dbReference>
<dbReference type="Pfam" id="PF00156">
    <property type="entry name" value="Pribosyltran"/>
    <property type="match status" value="1"/>
</dbReference>
<dbReference type="SUPFAM" id="SSF53271">
    <property type="entry name" value="PRTase-like"/>
    <property type="match status" value="1"/>
</dbReference>
<comment type="function">
    <text evidence="1">Regulates transcriptional attenuation of the pyrimidine nucleotide (pyr) operon by binding in a uridine-dependent manner to specific sites on pyr mRNA. This disrupts an antiterminator hairpin in the RNA and favors formation of a downstream transcription terminator, leading to a reduced expression of downstream genes.</text>
</comment>
<comment type="function">
    <text evidence="1">Also displays a weak uracil phosphoribosyltransferase activity which is not physiologically significant.</text>
</comment>
<comment type="catalytic activity">
    <reaction evidence="1">
        <text>UMP + diphosphate = 5-phospho-alpha-D-ribose 1-diphosphate + uracil</text>
        <dbReference type="Rhea" id="RHEA:13017"/>
        <dbReference type="ChEBI" id="CHEBI:17568"/>
        <dbReference type="ChEBI" id="CHEBI:33019"/>
        <dbReference type="ChEBI" id="CHEBI:57865"/>
        <dbReference type="ChEBI" id="CHEBI:58017"/>
        <dbReference type="EC" id="2.4.2.9"/>
    </reaction>
</comment>
<comment type="subunit">
    <text evidence="1">Homodimer and homohexamer; in equilibrium.</text>
</comment>
<comment type="similarity">
    <text evidence="1">Belongs to the purine/pyrimidine phosphoribosyltransferase family. PyrR subfamily.</text>
</comment>
<evidence type="ECO:0000255" key="1">
    <source>
        <dbReference type="HAMAP-Rule" id="MF_01219"/>
    </source>
</evidence>
<name>PYRR_CLOP1</name>
<keyword id="KW-0328">Glycosyltransferase</keyword>
<keyword id="KW-0694">RNA-binding</keyword>
<keyword id="KW-0804">Transcription</keyword>
<keyword id="KW-0805">Transcription regulation</keyword>
<keyword id="KW-0806">Transcription termination</keyword>
<keyword id="KW-0808">Transferase</keyword>
<feature type="chain" id="PRO_1000053829" description="Bifunctional protein PyrR">
    <location>
        <begin position="1"/>
        <end position="178"/>
    </location>
</feature>
<feature type="short sequence motif" description="PRPP-binding" evidence="1">
    <location>
        <begin position="99"/>
        <end position="111"/>
    </location>
</feature>
<reference key="1">
    <citation type="journal article" date="2006" name="Genome Res.">
        <title>Skewed genomic variability in strains of the toxigenic bacterial pathogen, Clostridium perfringens.</title>
        <authorList>
            <person name="Myers G.S.A."/>
            <person name="Rasko D.A."/>
            <person name="Cheung J.K."/>
            <person name="Ravel J."/>
            <person name="Seshadri R."/>
            <person name="DeBoy R.T."/>
            <person name="Ren Q."/>
            <person name="Varga J."/>
            <person name="Awad M.M."/>
            <person name="Brinkac L.M."/>
            <person name="Daugherty S.C."/>
            <person name="Haft D.H."/>
            <person name="Dodson R.J."/>
            <person name="Madupu R."/>
            <person name="Nelson W.C."/>
            <person name="Rosovitz M.J."/>
            <person name="Sullivan S.A."/>
            <person name="Khouri H."/>
            <person name="Dimitrov G.I."/>
            <person name="Watkins K.L."/>
            <person name="Mulligan S."/>
            <person name="Benton J."/>
            <person name="Radune D."/>
            <person name="Fisher D.J."/>
            <person name="Atkins H.S."/>
            <person name="Hiscox T."/>
            <person name="Jost B.H."/>
            <person name="Billington S.J."/>
            <person name="Songer J.G."/>
            <person name="McClane B.A."/>
            <person name="Titball R.W."/>
            <person name="Rood J.I."/>
            <person name="Melville S.B."/>
            <person name="Paulsen I.T."/>
        </authorList>
    </citation>
    <scope>NUCLEOTIDE SEQUENCE [LARGE SCALE GENOMIC DNA]</scope>
    <source>
        <strain>ATCC 13124 / DSM 756 / JCM 1290 / NCIMB 6125 / NCTC 8237 / S 107 / Type A</strain>
    </source>
</reference>
<proteinExistence type="inferred from homology"/>
<accession>Q0TPA8</accession>